<protein>
    <recommendedName>
        <fullName evidence="1">Type III pantothenate kinase</fullName>
        <ecNumber evidence="1">2.7.1.33</ecNumber>
    </recommendedName>
    <alternativeName>
        <fullName evidence="1">PanK-III</fullName>
    </alternativeName>
    <alternativeName>
        <fullName evidence="1">Pantothenic acid kinase</fullName>
    </alternativeName>
</protein>
<gene>
    <name evidence="1" type="primary">coaX</name>
    <name type="ordered locus">CFPG_023</name>
</gene>
<keyword id="KW-0067">ATP-binding</keyword>
<keyword id="KW-0173">Coenzyme A biosynthesis</keyword>
<keyword id="KW-0963">Cytoplasm</keyword>
<keyword id="KW-0418">Kinase</keyword>
<keyword id="KW-0479">Metal-binding</keyword>
<keyword id="KW-0547">Nucleotide-binding</keyword>
<keyword id="KW-0630">Potassium</keyword>
<keyword id="KW-1185">Reference proteome</keyword>
<keyword id="KW-0808">Transferase</keyword>
<evidence type="ECO:0000255" key="1">
    <source>
        <dbReference type="HAMAP-Rule" id="MF_01274"/>
    </source>
</evidence>
<name>COAX_AZOPC</name>
<accession>B6YQ14</accession>
<sequence length="245" mass="27811">MYIVIDQGNTILKIGLFEGKAVIKTFQTKEVKQEWFYSILKTYQPQAGILCSTREVSESLLSLLRESLSYFYEFKNNLPLPLSIDYQTPRTLGTDRLAAAVGAWYQKLNNNLLIIDIGTAITIDFVNRKGIYKGGNISLGPAMRLNALHYFTNSLPLISENGNIPIRGYDTETAIRSGVMEGIVHELGSYIEEYEKKENALTFLTGGNTIYFEKRLKGTLFVDKHLVLKGLNEILIYQKKFFKSK</sequence>
<proteinExistence type="inferred from homology"/>
<organism>
    <name type="scientific">Azobacteroides pseudotrichonymphae genomovar. CFP2</name>
    <dbReference type="NCBI Taxonomy" id="511995"/>
    <lineage>
        <taxon>Bacteria</taxon>
        <taxon>Pseudomonadati</taxon>
        <taxon>Bacteroidota</taxon>
        <taxon>Bacteroidia</taxon>
        <taxon>Bacteroidales</taxon>
        <taxon>Candidatus Azobacteroides</taxon>
    </lineage>
</organism>
<dbReference type="EC" id="2.7.1.33" evidence="1"/>
<dbReference type="EMBL" id="AP010656">
    <property type="protein sequence ID" value="BAG83286.1"/>
    <property type="molecule type" value="Genomic_DNA"/>
</dbReference>
<dbReference type="RefSeq" id="WP_012573047.1">
    <property type="nucleotide sequence ID" value="NC_011565.1"/>
</dbReference>
<dbReference type="SMR" id="B6YQ14"/>
<dbReference type="STRING" id="511995.CFPG_023"/>
<dbReference type="KEGG" id="aps:CFPG_023"/>
<dbReference type="eggNOG" id="COG1521">
    <property type="taxonomic scope" value="Bacteria"/>
</dbReference>
<dbReference type="HOGENOM" id="CLU_066627_2_0_10"/>
<dbReference type="OrthoDB" id="9804707at2"/>
<dbReference type="UniPathway" id="UPA00241">
    <property type="reaction ID" value="UER00352"/>
</dbReference>
<dbReference type="Proteomes" id="UP000000723">
    <property type="component" value="Chromosome"/>
</dbReference>
<dbReference type="GO" id="GO:0005737">
    <property type="term" value="C:cytoplasm"/>
    <property type="evidence" value="ECO:0007669"/>
    <property type="project" value="UniProtKB-SubCell"/>
</dbReference>
<dbReference type="GO" id="GO:0005524">
    <property type="term" value="F:ATP binding"/>
    <property type="evidence" value="ECO:0007669"/>
    <property type="project" value="UniProtKB-UniRule"/>
</dbReference>
<dbReference type="GO" id="GO:0046872">
    <property type="term" value="F:metal ion binding"/>
    <property type="evidence" value="ECO:0007669"/>
    <property type="project" value="UniProtKB-KW"/>
</dbReference>
<dbReference type="GO" id="GO:0004594">
    <property type="term" value="F:pantothenate kinase activity"/>
    <property type="evidence" value="ECO:0007669"/>
    <property type="project" value="UniProtKB-UniRule"/>
</dbReference>
<dbReference type="GO" id="GO:0015937">
    <property type="term" value="P:coenzyme A biosynthetic process"/>
    <property type="evidence" value="ECO:0007669"/>
    <property type="project" value="UniProtKB-UniRule"/>
</dbReference>
<dbReference type="CDD" id="cd24015">
    <property type="entry name" value="ASKHA_NBD_PanK-III"/>
    <property type="match status" value="1"/>
</dbReference>
<dbReference type="Gene3D" id="3.30.420.40">
    <property type="match status" value="1"/>
</dbReference>
<dbReference type="HAMAP" id="MF_01274">
    <property type="entry name" value="Pantothen_kinase_3"/>
    <property type="match status" value="1"/>
</dbReference>
<dbReference type="InterPro" id="IPR043129">
    <property type="entry name" value="ATPase_NBD"/>
</dbReference>
<dbReference type="InterPro" id="IPR004619">
    <property type="entry name" value="Type_III_PanK"/>
</dbReference>
<dbReference type="NCBIfam" id="TIGR00671">
    <property type="entry name" value="baf"/>
    <property type="match status" value="1"/>
</dbReference>
<dbReference type="NCBIfam" id="NF009850">
    <property type="entry name" value="PRK13320.1-2"/>
    <property type="match status" value="1"/>
</dbReference>
<dbReference type="PANTHER" id="PTHR34265">
    <property type="entry name" value="TYPE III PANTOTHENATE KINASE"/>
    <property type="match status" value="1"/>
</dbReference>
<dbReference type="PANTHER" id="PTHR34265:SF1">
    <property type="entry name" value="TYPE III PANTOTHENATE KINASE"/>
    <property type="match status" value="1"/>
</dbReference>
<dbReference type="Pfam" id="PF03309">
    <property type="entry name" value="Pan_kinase"/>
    <property type="match status" value="1"/>
</dbReference>
<dbReference type="SUPFAM" id="SSF53067">
    <property type="entry name" value="Actin-like ATPase domain"/>
    <property type="match status" value="2"/>
</dbReference>
<feature type="chain" id="PRO_1000140217" description="Type III pantothenate kinase">
    <location>
        <begin position="1"/>
        <end position="245"/>
    </location>
</feature>
<feature type="active site" description="Proton acceptor" evidence="1">
    <location>
        <position position="95"/>
    </location>
</feature>
<feature type="binding site" evidence="1">
    <location>
        <begin position="6"/>
        <end position="13"/>
    </location>
    <ligand>
        <name>ATP</name>
        <dbReference type="ChEBI" id="CHEBI:30616"/>
    </ligand>
</feature>
<feature type="binding site" evidence="1">
    <location>
        <position position="86"/>
    </location>
    <ligand>
        <name>substrate</name>
    </ligand>
</feature>
<feature type="binding site" evidence="1">
    <location>
        <begin position="93"/>
        <end position="96"/>
    </location>
    <ligand>
        <name>substrate</name>
    </ligand>
</feature>
<feature type="binding site" evidence="1">
    <location>
        <position position="116"/>
    </location>
    <ligand>
        <name>K(+)</name>
        <dbReference type="ChEBI" id="CHEBI:29103"/>
    </ligand>
</feature>
<feature type="binding site" evidence="1">
    <location>
        <position position="119"/>
    </location>
    <ligand>
        <name>ATP</name>
        <dbReference type="ChEBI" id="CHEBI:30616"/>
    </ligand>
</feature>
<feature type="binding site" evidence="1">
    <location>
        <position position="171"/>
    </location>
    <ligand>
        <name>substrate</name>
    </ligand>
</feature>
<reference key="1">
    <citation type="journal article" date="2008" name="Science">
        <title>Genome of an endosymbiont coupling N2 fixation to cellulolysis within RT protist cells in termite gut.</title>
        <authorList>
            <person name="Hongoh Y."/>
            <person name="Sharma V.K."/>
            <person name="Prakash T."/>
            <person name="Noda S."/>
            <person name="Toh H."/>
            <person name="Taylor T.D."/>
            <person name="Kudo T."/>
            <person name="Sakaki Y."/>
            <person name="Toyoda A."/>
            <person name="Hattori M."/>
            <person name="Ohkuma M."/>
        </authorList>
    </citation>
    <scope>NUCLEOTIDE SEQUENCE [LARGE SCALE GENOMIC DNA]</scope>
</reference>
<comment type="function">
    <text evidence="1">Catalyzes the phosphorylation of pantothenate (Pan), the first step in CoA biosynthesis.</text>
</comment>
<comment type="catalytic activity">
    <reaction evidence="1">
        <text>(R)-pantothenate + ATP = (R)-4'-phosphopantothenate + ADP + H(+)</text>
        <dbReference type="Rhea" id="RHEA:16373"/>
        <dbReference type="ChEBI" id="CHEBI:10986"/>
        <dbReference type="ChEBI" id="CHEBI:15378"/>
        <dbReference type="ChEBI" id="CHEBI:29032"/>
        <dbReference type="ChEBI" id="CHEBI:30616"/>
        <dbReference type="ChEBI" id="CHEBI:456216"/>
        <dbReference type="EC" id="2.7.1.33"/>
    </reaction>
</comment>
<comment type="cofactor">
    <cofactor evidence="1">
        <name>NH4(+)</name>
        <dbReference type="ChEBI" id="CHEBI:28938"/>
    </cofactor>
    <cofactor evidence="1">
        <name>K(+)</name>
        <dbReference type="ChEBI" id="CHEBI:29103"/>
    </cofactor>
    <text evidence="1">A monovalent cation. Ammonium or potassium.</text>
</comment>
<comment type="pathway">
    <text evidence="1">Cofactor biosynthesis; coenzyme A biosynthesis; CoA from (R)-pantothenate: step 1/5.</text>
</comment>
<comment type="subunit">
    <text evidence="1">Homodimer.</text>
</comment>
<comment type="subcellular location">
    <subcellularLocation>
        <location evidence="1">Cytoplasm</location>
    </subcellularLocation>
</comment>
<comment type="similarity">
    <text evidence="1">Belongs to the type III pantothenate kinase family.</text>
</comment>